<reference key="1">
    <citation type="journal article" date="2008" name="J. Bacteriol.">
        <title>The pangenome structure of Escherichia coli: comparative genomic analysis of E. coli commensal and pathogenic isolates.</title>
        <authorList>
            <person name="Rasko D.A."/>
            <person name="Rosovitz M.J."/>
            <person name="Myers G.S.A."/>
            <person name="Mongodin E.F."/>
            <person name="Fricke W.F."/>
            <person name="Gajer P."/>
            <person name="Crabtree J."/>
            <person name="Sebaihia M."/>
            <person name="Thomson N.R."/>
            <person name="Chaudhuri R."/>
            <person name="Henderson I.R."/>
            <person name="Sperandio V."/>
            <person name="Ravel J."/>
        </authorList>
    </citation>
    <scope>NUCLEOTIDE SEQUENCE [LARGE SCALE GENOMIC DNA]</scope>
    <source>
        <strain>E24377A / ETEC</strain>
    </source>
</reference>
<comment type="subcellular location">
    <subcellularLocation>
        <location evidence="1">Cell inner membrane</location>
        <topology evidence="1">Multi-pass membrane protein</topology>
    </subcellularLocation>
</comment>
<comment type="similarity">
    <text evidence="1">Belongs to the UPF0283 family.</text>
</comment>
<evidence type="ECO:0000255" key="1">
    <source>
        <dbReference type="HAMAP-Rule" id="MF_01085"/>
    </source>
</evidence>
<proteinExistence type="inferred from homology"/>
<gene>
    <name evidence="1" type="primary">ycjF</name>
    <name type="ordered locus">EcE24377A_1533</name>
</gene>
<sequence length="353" mass="39361">MTEPLKPRIDFDGPLEVDQNPKFRAQQTFDENQAQNFAPATLDEAPEEEGQVEAVMDAALRPKRSLWRKMVMGGLALFGASVVGQGVQWTMNAWQTQDWVALGGCAAGALIIGAGVGSVVTEWRRLWRLRQRAHERDEARDLLHSHGTGKGRAFCEKLAQQAGIDQSHPALQRWYASIHETQNDREVVSLYAHLVQPVLDAQARREISRSAAESTLMIAVSPLALVDMAFIAWRNLRLINRIATLYGIELGYYSRLRLFKLVLLNIAFAGASELVREVGMDWMSQDLAARLSTRAAQGIGAGLLTARLGIKAMELCRPLPWIDDDKPRLGDFRRQLIGQVKETLQKGKTPSEK</sequence>
<protein>
    <recommendedName>
        <fullName evidence="1">UPF0283 membrane protein YcjF</fullName>
    </recommendedName>
</protein>
<accession>A7ZLF1</accession>
<keyword id="KW-0997">Cell inner membrane</keyword>
<keyword id="KW-1003">Cell membrane</keyword>
<keyword id="KW-0472">Membrane</keyword>
<keyword id="KW-1185">Reference proteome</keyword>
<keyword id="KW-0812">Transmembrane</keyword>
<keyword id="KW-1133">Transmembrane helix</keyword>
<feature type="chain" id="PRO_1000064835" description="UPF0283 membrane protein YcjF">
    <location>
        <begin position="1"/>
        <end position="353"/>
    </location>
</feature>
<feature type="transmembrane region" description="Helical" evidence="1">
    <location>
        <begin position="70"/>
        <end position="90"/>
    </location>
</feature>
<feature type="transmembrane region" description="Helical" evidence="1">
    <location>
        <begin position="100"/>
        <end position="120"/>
    </location>
</feature>
<feature type="transmembrane region" description="Helical" evidence="1">
    <location>
        <begin position="213"/>
        <end position="233"/>
    </location>
</feature>
<name>YCJF_ECO24</name>
<organism>
    <name type="scientific">Escherichia coli O139:H28 (strain E24377A / ETEC)</name>
    <dbReference type="NCBI Taxonomy" id="331111"/>
    <lineage>
        <taxon>Bacteria</taxon>
        <taxon>Pseudomonadati</taxon>
        <taxon>Pseudomonadota</taxon>
        <taxon>Gammaproteobacteria</taxon>
        <taxon>Enterobacterales</taxon>
        <taxon>Enterobacteriaceae</taxon>
        <taxon>Escherichia</taxon>
    </lineage>
</organism>
<dbReference type="EMBL" id="CP000800">
    <property type="protein sequence ID" value="ABV20556.1"/>
    <property type="molecule type" value="Genomic_DNA"/>
</dbReference>
<dbReference type="RefSeq" id="WP_000138717.1">
    <property type="nucleotide sequence ID" value="NC_009801.1"/>
</dbReference>
<dbReference type="SMR" id="A7ZLF1"/>
<dbReference type="KEGG" id="ecw:EcE24377A_1533"/>
<dbReference type="HOGENOM" id="CLU_057693_2_0_6"/>
<dbReference type="Proteomes" id="UP000001122">
    <property type="component" value="Chromosome"/>
</dbReference>
<dbReference type="GO" id="GO:0005886">
    <property type="term" value="C:plasma membrane"/>
    <property type="evidence" value="ECO:0007669"/>
    <property type="project" value="UniProtKB-SubCell"/>
</dbReference>
<dbReference type="HAMAP" id="MF_01085">
    <property type="entry name" value="UPF0283"/>
    <property type="match status" value="1"/>
</dbReference>
<dbReference type="InterPro" id="IPR021147">
    <property type="entry name" value="DUF697"/>
</dbReference>
<dbReference type="InterPro" id="IPR006507">
    <property type="entry name" value="UPF0283"/>
</dbReference>
<dbReference type="NCBIfam" id="TIGR01620">
    <property type="entry name" value="hyp_HI0043"/>
    <property type="match status" value="1"/>
</dbReference>
<dbReference type="PANTHER" id="PTHR39342">
    <property type="entry name" value="UPF0283 MEMBRANE PROTEIN YCJF"/>
    <property type="match status" value="1"/>
</dbReference>
<dbReference type="PANTHER" id="PTHR39342:SF1">
    <property type="entry name" value="UPF0283 MEMBRANE PROTEIN YCJF"/>
    <property type="match status" value="1"/>
</dbReference>
<dbReference type="Pfam" id="PF05128">
    <property type="entry name" value="DUF697"/>
    <property type="match status" value="1"/>
</dbReference>